<gene>
    <name evidence="1" type="primary">aceK</name>
    <name type="ordered locus">ECP_4226</name>
</gene>
<proteinExistence type="inferred from homology"/>
<evidence type="ECO:0000255" key="1">
    <source>
        <dbReference type="HAMAP-Rule" id="MF_00747"/>
    </source>
</evidence>
<sequence length="574" mass="67206">MPRGLELLIAQTILQGFDAQYGRFLEVTSGAQQRFEQADWHAVQQAMKNRIHLYDHHVGLVVEQLRCITNGQSTDAAFLLRVKEHYTRLLPDYPRFEIAESFFNSVYCRLFDHRSLTPERLFIFSSQPERRFRTIPRPLAKDFHPDHGWESLLMRVISDLPLRLRWQNKSRDIHYIVRHLTETLGTDNLAESHLQVANELFYRNKAAWLVGKLITPSGTLPFLLPIHQTDDGELFIDTCLTTTAEASIVFGFARSYFMVYAPLPAALVEWLREILPGKTTAELYMAIGCQKHAKTESYREYLVYLQGCNEQFIEAPGIRGMVMLVFTLPGFDRVFKVIKDRFAPQKEMSAAHVRACYQLVKEHDRVGRMADTQEFENFVLEKRHISPALMELLLQEAAEKITDLGEQIVIRHLYIERRMVPLNIWLEQVEGQQLRDAIEEYGNAIRQLAAANIFPGDMLFKNFGVTRHGRVVFYDYDEICYMTEVNFRDIPLPRYPEDELASEPWYSVSPGDVFPEEFRHWLCADPRIGPLFEEMHADLFRADYWRALQNRIREGHVEDVYAYRRRQRFSVRFV</sequence>
<comment type="function">
    <text evidence="1">Bifunctional enzyme which can phosphorylate or dephosphorylate isocitrate dehydrogenase (IDH) on a specific serine residue. This is a regulatory mechanism which enables bacteria to bypass the Krebs cycle via the glyoxylate shunt in response to the source of carbon. When bacteria are grown on glucose, IDH is fully active and unphosphorylated, but when grown on acetate or ethanol, the activity of IDH declines drastically concomitant with its phosphorylation.</text>
</comment>
<comment type="catalytic activity">
    <reaction evidence="1">
        <text>L-seryl-[isocitrate dehydrogenase] + ATP = O-phospho-L-seryl-[isocitrate dehydrogenase] + ADP + H(+)</text>
        <dbReference type="Rhea" id="RHEA:43540"/>
        <dbReference type="Rhea" id="RHEA-COMP:10605"/>
        <dbReference type="Rhea" id="RHEA-COMP:10606"/>
        <dbReference type="ChEBI" id="CHEBI:15378"/>
        <dbReference type="ChEBI" id="CHEBI:29999"/>
        <dbReference type="ChEBI" id="CHEBI:30616"/>
        <dbReference type="ChEBI" id="CHEBI:83421"/>
        <dbReference type="ChEBI" id="CHEBI:456216"/>
        <dbReference type="EC" id="2.7.11.5"/>
    </reaction>
</comment>
<comment type="subcellular location">
    <subcellularLocation>
        <location evidence="1">Cytoplasm</location>
    </subcellularLocation>
</comment>
<comment type="similarity">
    <text evidence="1">Belongs to the AceK family.</text>
</comment>
<dbReference type="EC" id="2.7.11.5" evidence="1"/>
<dbReference type="EC" id="3.1.3.-" evidence="1"/>
<dbReference type="EMBL" id="CP000247">
    <property type="protein sequence ID" value="ABG72176.1"/>
    <property type="molecule type" value="Genomic_DNA"/>
</dbReference>
<dbReference type="RefSeq" id="WP_001137237.1">
    <property type="nucleotide sequence ID" value="NC_008253.1"/>
</dbReference>
<dbReference type="SMR" id="Q0TA53"/>
<dbReference type="KEGG" id="ecp:ECP_4226"/>
<dbReference type="HOGENOM" id="CLU_033804_1_1_6"/>
<dbReference type="Proteomes" id="UP000009182">
    <property type="component" value="Chromosome"/>
</dbReference>
<dbReference type="GO" id="GO:0005737">
    <property type="term" value="C:cytoplasm"/>
    <property type="evidence" value="ECO:0007669"/>
    <property type="project" value="UniProtKB-SubCell"/>
</dbReference>
<dbReference type="GO" id="GO:0008772">
    <property type="term" value="F:[isocitrate dehydrogenase (NADP+)] kinase activity"/>
    <property type="evidence" value="ECO:0007669"/>
    <property type="project" value="UniProtKB-UniRule"/>
</dbReference>
<dbReference type="GO" id="GO:0016208">
    <property type="term" value="F:AMP binding"/>
    <property type="evidence" value="ECO:0007669"/>
    <property type="project" value="TreeGrafter"/>
</dbReference>
<dbReference type="GO" id="GO:0005524">
    <property type="term" value="F:ATP binding"/>
    <property type="evidence" value="ECO:0007669"/>
    <property type="project" value="UniProtKB-UniRule"/>
</dbReference>
<dbReference type="GO" id="GO:0004721">
    <property type="term" value="F:phosphoprotein phosphatase activity"/>
    <property type="evidence" value="ECO:0007669"/>
    <property type="project" value="UniProtKB-KW"/>
</dbReference>
<dbReference type="GO" id="GO:0004674">
    <property type="term" value="F:protein serine/threonine kinase activity"/>
    <property type="evidence" value="ECO:0007669"/>
    <property type="project" value="UniProtKB-KW"/>
</dbReference>
<dbReference type="GO" id="GO:0006006">
    <property type="term" value="P:glucose metabolic process"/>
    <property type="evidence" value="ECO:0007669"/>
    <property type="project" value="InterPro"/>
</dbReference>
<dbReference type="GO" id="GO:0006097">
    <property type="term" value="P:glyoxylate cycle"/>
    <property type="evidence" value="ECO:0007669"/>
    <property type="project" value="UniProtKB-UniRule"/>
</dbReference>
<dbReference type="GO" id="GO:0006099">
    <property type="term" value="P:tricarboxylic acid cycle"/>
    <property type="evidence" value="ECO:0007669"/>
    <property type="project" value="UniProtKB-UniRule"/>
</dbReference>
<dbReference type="HAMAP" id="MF_00747">
    <property type="entry name" value="AceK"/>
    <property type="match status" value="1"/>
</dbReference>
<dbReference type="InterPro" id="IPR046855">
    <property type="entry name" value="AceK_kinase"/>
</dbReference>
<dbReference type="InterPro" id="IPR046854">
    <property type="entry name" value="AceK_regulatory"/>
</dbReference>
<dbReference type="InterPro" id="IPR010452">
    <property type="entry name" value="Isocitrate_DH_AceK"/>
</dbReference>
<dbReference type="NCBIfam" id="NF002804">
    <property type="entry name" value="PRK02946.1"/>
    <property type="match status" value="1"/>
</dbReference>
<dbReference type="PANTHER" id="PTHR39559">
    <property type="match status" value="1"/>
</dbReference>
<dbReference type="PANTHER" id="PTHR39559:SF1">
    <property type="entry name" value="ISOCITRATE DEHYDROGENASE KINASE_PHOSPHATASE"/>
    <property type="match status" value="1"/>
</dbReference>
<dbReference type="Pfam" id="PF06315">
    <property type="entry name" value="AceK_kinase"/>
    <property type="match status" value="1"/>
</dbReference>
<dbReference type="Pfam" id="PF20423">
    <property type="entry name" value="AceK_regulatory"/>
    <property type="match status" value="1"/>
</dbReference>
<dbReference type="PIRSF" id="PIRSF000719">
    <property type="entry name" value="AceK"/>
    <property type="match status" value="1"/>
</dbReference>
<reference key="1">
    <citation type="journal article" date="2006" name="Mol. Microbiol.">
        <title>Role of pathogenicity island-associated integrases in the genome plasticity of uropathogenic Escherichia coli strain 536.</title>
        <authorList>
            <person name="Hochhut B."/>
            <person name="Wilde C."/>
            <person name="Balling G."/>
            <person name="Middendorf B."/>
            <person name="Dobrindt U."/>
            <person name="Brzuszkiewicz E."/>
            <person name="Gottschalk G."/>
            <person name="Carniel E."/>
            <person name="Hacker J."/>
        </authorList>
    </citation>
    <scope>NUCLEOTIDE SEQUENCE [LARGE SCALE GENOMIC DNA]</scope>
    <source>
        <strain>536 / UPEC</strain>
    </source>
</reference>
<accession>Q0TA53</accession>
<feature type="chain" id="PRO_0000259151" description="Isocitrate dehydrogenase kinase/phosphatase">
    <location>
        <begin position="1"/>
        <end position="574"/>
    </location>
</feature>
<feature type="active site" evidence="1">
    <location>
        <position position="371"/>
    </location>
</feature>
<feature type="binding site" evidence="1">
    <location>
        <begin position="315"/>
        <end position="321"/>
    </location>
    <ligand>
        <name>ATP</name>
        <dbReference type="ChEBI" id="CHEBI:30616"/>
    </ligand>
</feature>
<feature type="binding site" evidence="1">
    <location>
        <position position="336"/>
    </location>
    <ligand>
        <name>ATP</name>
        <dbReference type="ChEBI" id="CHEBI:30616"/>
    </ligand>
</feature>
<keyword id="KW-0067">ATP-binding</keyword>
<keyword id="KW-0963">Cytoplasm</keyword>
<keyword id="KW-0329">Glyoxylate bypass</keyword>
<keyword id="KW-0378">Hydrolase</keyword>
<keyword id="KW-0418">Kinase</keyword>
<keyword id="KW-0547">Nucleotide-binding</keyword>
<keyword id="KW-0904">Protein phosphatase</keyword>
<keyword id="KW-0723">Serine/threonine-protein kinase</keyword>
<keyword id="KW-0808">Transferase</keyword>
<keyword id="KW-0816">Tricarboxylic acid cycle</keyword>
<name>ACEK_ECOL5</name>
<organism>
    <name type="scientific">Escherichia coli O6:K15:H31 (strain 536 / UPEC)</name>
    <dbReference type="NCBI Taxonomy" id="362663"/>
    <lineage>
        <taxon>Bacteria</taxon>
        <taxon>Pseudomonadati</taxon>
        <taxon>Pseudomonadota</taxon>
        <taxon>Gammaproteobacteria</taxon>
        <taxon>Enterobacterales</taxon>
        <taxon>Enterobacteriaceae</taxon>
        <taxon>Escherichia</taxon>
    </lineage>
</organism>
<protein>
    <recommendedName>
        <fullName evidence="1">Isocitrate dehydrogenase kinase/phosphatase</fullName>
        <shortName evidence="1">IDH kinase/phosphatase</shortName>
        <shortName evidence="1">IDHK/P</shortName>
        <ecNumber evidence="1">2.7.11.5</ecNumber>
        <ecNumber evidence="1">3.1.3.-</ecNumber>
    </recommendedName>
</protein>